<keyword id="KW-0396">Initiation factor</keyword>
<keyword id="KW-0648">Protein biosynthesis</keyword>
<keyword id="KW-1185">Reference proteome</keyword>
<accession>Q6DFN7</accession>
<accession>Q28I35</accession>
<comment type="function">
    <text evidence="1">May be involved in the translation of target mRNAs by scanning and recognition of the initiation codon. Involved in translation initiation; promotes recruitment of aminoacetyled initiator tRNA to P site of 40S ribosomes. Can promote release of deacylated tRNA and mRNA from recycled 40S subunits following ABCE1-mediated dissociation of post-termination ribosomal complexes into subunits (By similarity).</text>
</comment>
<comment type="similarity">
    <text evidence="4">Belongs to the DENR family.</text>
</comment>
<reference key="1">
    <citation type="submission" date="2006-03" db="EMBL/GenBank/DDBJ databases">
        <authorList>
            <consortium name="Sanger Xenopus tropicalis EST/cDNA project"/>
        </authorList>
    </citation>
    <scope>NUCLEOTIDE SEQUENCE [LARGE SCALE MRNA]</scope>
    <source>
        <tissue>Egg</tissue>
    </source>
</reference>
<reference key="2">
    <citation type="submission" date="2004-12" db="EMBL/GenBank/DDBJ databases">
        <authorList>
            <consortium name="NIH - Xenopus Gene Collection (XGC) project"/>
        </authorList>
    </citation>
    <scope>NUCLEOTIDE SEQUENCE [LARGE SCALE MRNA]</scope>
    <source>
        <tissue>Embryo</tissue>
    </source>
</reference>
<sequence>MASIAIENAEPVPSDCKGDLKISKFDGDLPLKVLYCGVCSLPTEYCEYMPDVAKCRQWLEKNFPDEFSKLTLGISPKQETGTVEGQATSGEEEEKKKQKRGGRGQIKQKKKTVPQKVTIAKIPRAKKKYVTRVCGLATFEIELKDAQRFFAQKFSCGASVTGEDEIIIQGDFTDDIIDVIQEKWPEVDDDSIEDLGEVKK</sequence>
<name>DENR_XENTR</name>
<evidence type="ECO:0000250" key="1"/>
<evidence type="ECO:0000255" key="2">
    <source>
        <dbReference type="PROSITE-ProRule" id="PRU00200"/>
    </source>
</evidence>
<evidence type="ECO:0000256" key="3">
    <source>
        <dbReference type="SAM" id="MobiDB-lite"/>
    </source>
</evidence>
<evidence type="ECO:0000305" key="4"/>
<dbReference type="EMBL" id="CR760613">
    <property type="protein sequence ID" value="CAJ81326.1"/>
    <property type="molecule type" value="mRNA"/>
</dbReference>
<dbReference type="EMBL" id="BC076697">
    <property type="protein sequence ID" value="AAH76697.1"/>
    <property type="molecule type" value="mRNA"/>
</dbReference>
<dbReference type="EMBL" id="BC087985">
    <property type="protein sequence ID" value="AAH87985.1"/>
    <property type="molecule type" value="mRNA"/>
</dbReference>
<dbReference type="RefSeq" id="NP_001006814.1">
    <property type="nucleotide sequence ID" value="NM_001006813.1"/>
</dbReference>
<dbReference type="RefSeq" id="XP_012815419.1">
    <property type="nucleotide sequence ID" value="XM_012959965.2"/>
</dbReference>
<dbReference type="SMR" id="Q6DFN7"/>
<dbReference type="FunCoup" id="Q6DFN7">
    <property type="interactions" value="761"/>
</dbReference>
<dbReference type="STRING" id="8364.ENSXETP00000001718"/>
<dbReference type="PaxDb" id="8364-ENSXETP00000061854"/>
<dbReference type="DNASU" id="448530"/>
<dbReference type="GeneID" id="448530"/>
<dbReference type="KEGG" id="xtr:448530"/>
<dbReference type="AGR" id="Xenbase:XB-GENE-1002798"/>
<dbReference type="CTD" id="8562"/>
<dbReference type="Xenbase" id="XB-GENE-1002798">
    <property type="gene designation" value="denr"/>
</dbReference>
<dbReference type="eggNOG" id="KOG3239">
    <property type="taxonomic scope" value="Eukaryota"/>
</dbReference>
<dbReference type="HOGENOM" id="CLU_073511_1_0_1"/>
<dbReference type="InParanoid" id="Q6DFN7"/>
<dbReference type="OMA" id="EVFEIDM"/>
<dbReference type="OrthoDB" id="277199at2759"/>
<dbReference type="PhylomeDB" id="Q6DFN7"/>
<dbReference type="TreeFam" id="TF105912"/>
<dbReference type="Proteomes" id="UP000008143">
    <property type="component" value="Chromosome 1"/>
</dbReference>
<dbReference type="Bgee" id="ENSXETG00000005791">
    <property type="expression patterns" value="Expressed in testis and 16 other cell types or tissues"/>
</dbReference>
<dbReference type="GO" id="GO:0003743">
    <property type="term" value="F:translation initiation factor activity"/>
    <property type="evidence" value="ECO:0007669"/>
    <property type="project" value="UniProtKB-KW"/>
</dbReference>
<dbReference type="CDD" id="cd11607">
    <property type="entry name" value="DENR_C"/>
    <property type="match status" value="1"/>
</dbReference>
<dbReference type="FunFam" id="3.30.780.10:FF:000004">
    <property type="entry name" value="density-regulated protein-like"/>
    <property type="match status" value="1"/>
</dbReference>
<dbReference type="Gene3D" id="3.30.780.10">
    <property type="entry name" value="SUI1-like domain"/>
    <property type="match status" value="1"/>
</dbReference>
<dbReference type="InterPro" id="IPR050318">
    <property type="entry name" value="DENR/SUI1_TIF"/>
</dbReference>
<dbReference type="InterPro" id="IPR046447">
    <property type="entry name" value="DENR_C"/>
</dbReference>
<dbReference type="InterPro" id="IPR005873">
    <property type="entry name" value="DENR_eukaryotes"/>
</dbReference>
<dbReference type="InterPro" id="IPR048517">
    <property type="entry name" value="DENR_N"/>
</dbReference>
<dbReference type="InterPro" id="IPR001950">
    <property type="entry name" value="SUI1"/>
</dbReference>
<dbReference type="InterPro" id="IPR036877">
    <property type="entry name" value="SUI1_dom_sf"/>
</dbReference>
<dbReference type="NCBIfam" id="TIGR01159">
    <property type="entry name" value="DRP1"/>
    <property type="match status" value="1"/>
</dbReference>
<dbReference type="PANTHER" id="PTHR12789:SF0">
    <property type="entry name" value="DENSITY-REGULATED PROTEIN"/>
    <property type="match status" value="1"/>
</dbReference>
<dbReference type="PANTHER" id="PTHR12789">
    <property type="entry name" value="DENSITY-REGULATED PROTEIN HOMOLOG"/>
    <property type="match status" value="1"/>
</dbReference>
<dbReference type="Pfam" id="PF21023">
    <property type="entry name" value="DENR_N"/>
    <property type="match status" value="1"/>
</dbReference>
<dbReference type="Pfam" id="PF01253">
    <property type="entry name" value="SUI1"/>
    <property type="match status" value="1"/>
</dbReference>
<dbReference type="SUPFAM" id="SSF55159">
    <property type="entry name" value="eIF1-like"/>
    <property type="match status" value="1"/>
</dbReference>
<dbReference type="PROSITE" id="PS50296">
    <property type="entry name" value="SUI1"/>
    <property type="match status" value="1"/>
</dbReference>
<organism>
    <name type="scientific">Xenopus tropicalis</name>
    <name type="common">Western clawed frog</name>
    <name type="synonym">Silurana tropicalis</name>
    <dbReference type="NCBI Taxonomy" id="8364"/>
    <lineage>
        <taxon>Eukaryota</taxon>
        <taxon>Metazoa</taxon>
        <taxon>Chordata</taxon>
        <taxon>Craniata</taxon>
        <taxon>Vertebrata</taxon>
        <taxon>Euteleostomi</taxon>
        <taxon>Amphibia</taxon>
        <taxon>Batrachia</taxon>
        <taxon>Anura</taxon>
        <taxon>Pipoidea</taxon>
        <taxon>Pipidae</taxon>
        <taxon>Xenopodinae</taxon>
        <taxon>Xenopus</taxon>
        <taxon>Silurana</taxon>
    </lineage>
</organism>
<gene>
    <name type="primary">denr</name>
    <name type="ORF">TEgg137c20.1</name>
</gene>
<protein>
    <recommendedName>
        <fullName>Density-regulated protein</fullName>
        <shortName>DRP</shortName>
    </recommendedName>
</protein>
<feature type="chain" id="PRO_0000130606" description="Density-regulated protein">
    <location>
        <begin position="1"/>
        <end position="200"/>
    </location>
</feature>
<feature type="domain" description="SUI1" evidence="2">
    <location>
        <begin position="117"/>
        <end position="184"/>
    </location>
</feature>
<feature type="region of interest" description="Disordered" evidence="3">
    <location>
        <begin position="78"/>
        <end position="112"/>
    </location>
</feature>
<feature type="compositionally biased region" description="Polar residues" evidence="3">
    <location>
        <begin position="78"/>
        <end position="89"/>
    </location>
</feature>
<feature type="compositionally biased region" description="Basic residues" evidence="3">
    <location>
        <begin position="97"/>
        <end position="112"/>
    </location>
</feature>
<proteinExistence type="evidence at transcript level"/>